<keyword id="KW-0002">3D-structure</keyword>
<keyword id="KW-0963">Cytoplasm</keyword>
<keyword id="KW-0206">Cytoskeleton</keyword>
<keyword id="KW-1185">Reference proteome</keyword>
<comment type="subcellular location">
    <subcellularLocation>
        <location evidence="3">Cytoplasm</location>
        <location evidence="3">Cytoskeleton</location>
        <location evidence="3">Microtubule organizing center</location>
        <location evidence="3">Spindle pole body</location>
    </subcellularLocation>
</comment>
<comment type="similarity">
    <text evidence="4">Belongs to the TFP11/STIP family.</text>
</comment>
<reference key="1">
    <citation type="journal article" date="2002" name="Nature">
        <title>The genome sequence of Schizosaccharomyces pombe.</title>
        <authorList>
            <person name="Wood V."/>
            <person name="Gwilliam R."/>
            <person name="Rajandream M.A."/>
            <person name="Lyne M.H."/>
            <person name="Lyne R."/>
            <person name="Stewart A."/>
            <person name="Sgouros J.G."/>
            <person name="Peat N."/>
            <person name="Hayles J."/>
            <person name="Baker S.G."/>
            <person name="Basham D."/>
            <person name="Bowman S."/>
            <person name="Brooks K."/>
            <person name="Brown D."/>
            <person name="Brown S."/>
            <person name="Chillingworth T."/>
            <person name="Churcher C.M."/>
            <person name="Collins M."/>
            <person name="Connor R."/>
            <person name="Cronin A."/>
            <person name="Davis P."/>
            <person name="Feltwell T."/>
            <person name="Fraser A."/>
            <person name="Gentles S."/>
            <person name="Goble A."/>
            <person name="Hamlin N."/>
            <person name="Harris D.E."/>
            <person name="Hidalgo J."/>
            <person name="Hodgson G."/>
            <person name="Holroyd S."/>
            <person name="Hornsby T."/>
            <person name="Howarth S."/>
            <person name="Huckle E.J."/>
            <person name="Hunt S."/>
            <person name="Jagels K."/>
            <person name="James K.D."/>
            <person name="Jones L."/>
            <person name="Jones M."/>
            <person name="Leather S."/>
            <person name="McDonald S."/>
            <person name="McLean J."/>
            <person name="Mooney P."/>
            <person name="Moule S."/>
            <person name="Mungall K.L."/>
            <person name="Murphy L.D."/>
            <person name="Niblett D."/>
            <person name="Odell C."/>
            <person name="Oliver K."/>
            <person name="O'Neil S."/>
            <person name="Pearson D."/>
            <person name="Quail M.A."/>
            <person name="Rabbinowitsch E."/>
            <person name="Rutherford K.M."/>
            <person name="Rutter S."/>
            <person name="Saunders D."/>
            <person name="Seeger K."/>
            <person name="Sharp S."/>
            <person name="Skelton J."/>
            <person name="Simmonds M.N."/>
            <person name="Squares R."/>
            <person name="Squares S."/>
            <person name="Stevens K."/>
            <person name="Taylor K."/>
            <person name="Taylor R.G."/>
            <person name="Tivey A."/>
            <person name="Walsh S.V."/>
            <person name="Warren T."/>
            <person name="Whitehead S."/>
            <person name="Woodward J.R."/>
            <person name="Volckaert G."/>
            <person name="Aert R."/>
            <person name="Robben J."/>
            <person name="Grymonprez B."/>
            <person name="Weltjens I."/>
            <person name="Vanstreels E."/>
            <person name="Rieger M."/>
            <person name="Schaefer M."/>
            <person name="Mueller-Auer S."/>
            <person name="Gabel C."/>
            <person name="Fuchs M."/>
            <person name="Duesterhoeft A."/>
            <person name="Fritzc C."/>
            <person name="Holzer E."/>
            <person name="Moestl D."/>
            <person name="Hilbert H."/>
            <person name="Borzym K."/>
            <person name="Langer I."/>
            <person name="Beck A."/>
            <person name="Lehrach H."/>
            <person name="Reinhardt R."/>
            <person name="Pohl T.M."/>
            <person name="Eger P."/>
            <person name="Zimmermann W."/>
            <person name="Wedler H."/>
            <person name="Wambutt R."/>
            <person name="Purnelle B."/>
            <person name="Goffeau A."/>
            <person name="Cadieu E."/>
            <person name="Dreano S."/>
            <person name="Gloux S."/>
            <person name="Lelaure V."/>
            <person name="Mottier S."/>
            <person name="Galibert F."/>
            <person name="Aves S.J."/>
            <person name="Xiang Z."/>
            <person name="Hunt C."/>
            <person name="Moore K."/>
            <person name="Hurst S.M."/>
            <person name="Lucas M."/>
            <person name="Rochet M."/>
            <person name="Gaillardin C."/>
            <person name="Tallada V.A."/>
            <person name="Garzon A."/>
            <person name="Thode G."/>
            <person name="Daga R.R."/>
            <person name="Cruzado L."/>
            <person name="Jimenez J."/>
            <person name="Sanchez M."/>
            <person name="del Rey F."/>
            <person name="Benito J."/>
            <person name="Dominguez A."/>
            <person name="Revuelta J.L."/>
            <person name="Moreno S."/>
            <person name="Armstrong J."/>
            <person name="Forsburg S.L."/>
            <person name="Cerutti L."/>
            <person name="Lowe T."/>
            <person name="McCombie W.R."/>
            <person name="Paulsen I."/>
            <person name="Potashkin J."/>
            <person name="Shpakovski G.V."/>
            <person name="Ussery D."/>
            <person name="Barrell B.G."/>
            <person name="Nurse P."/>
        </authorList>
    </citation>
    <scope>NUCLEOTIDE SEQUENCE [LARGE SCALE GENOMIC DNA]</scope>
    <source>
        <strain>972 / ATCC 24843</strain>
    </source>
</reference>
<reference key="2">
    <citation type="journal article" date="2006" name="Nat. Biotechnol.">
        <title>ORFeome cloning and global analysis of protein localization in the fission yeast Schizosaccharomyces pombe.</title>
        <authorList>
            <person name="Matsuyama A."/>
            <person name="Arai R."/>
            <person name="Yashiroda Y."/>
            <person name="Shirai A."/>
            <person name="Kamata A."/>
            <person name="Sekido S."/>
            <person name="Kobayashi Y."/>
            <person name="Hashimoto A."/>
            <person name="Hamamoto M."/>
            <person name="Hiraoka Y."/>
            <person name="Horinouchi S."/>
            <person name="Yoshida M."/>
        </authorList>
    </citation>
    <scope>SUBCELLULAR LOCATION [LARGE SCALE ANALYSIS]</scope>
</reference>
<gene>
    <name type="ORF">SPAC1486.03c</name>
</gene>
<organism>
    <name type="scientific">Schizosaccharomyces pombe (strain 972 / ATCC 24843)</name>
    <name type="common">Fission yeast</name>
    <dbReference type="NCBI Taxonomy" id="284812"/>
    <lineage>
        <taxon>Eukaryota</taxon>
        <taxon>Fungi</taxon>
        <taxon>Dikarya</taxon>
        <taxon>Ascomycota</taxon>
        <taxon>Taphrinomycotina</taxon>
        <taxon>Schizosaccharomycetes</taxon>
        <taxon>Schizosaccharomycetales</taxon>
        <taxon>Schizosaccharomycetaceae</taxon>
        <taxon>Schizosaccharomyces</taxon>
    </lineage>
</organism>
<sequence length="797" mass="91669">MQNEYVDMNSSSEDSDGDSILEEGRLRPSFRGQQKERDMLGIFGEEDEDGFHNSGIGSARLRRKNISFVEKSEQVKANKQVTADDLLEAHSIPQLKNKNDEVSQAKNIPKMKFNTTGFGAKMLEKMGYKQGQGLGANAEGIAEPVQSKLRPERVGLGAVRERTEKQRKEAIARGEISDSEDEKHTVKQKPLREKKKKPLKSSEEISKDMGSYNLPRFLASLIDASLNDTKEIEFVTSNKEELGLEGRDMSTSGINQLSRLARVECEHHASAWQQLQARRAYVKMELKRVTTEFDEKSVEISRLEKLLGKVMEVKSRSMEFTVPEAEIDVIEKRLQPLNNLIETLPVEFSEASMHFELDSVAVSILAFVLSEPIKNWDVWKHPYFMLESFLSWKNSLYSKDFRPKREESSTFMDIDVEFDDELEGQSLTHYESFMMFVWKKKIGEELKKWIIQDSLKALQLLEAWDPVVPEKVKDSLIQDDILPRLKDAVSKWNPKLKLKKNDSLHHCIFPWLPYLEKHADSLLQSVLVQFSLILSPWKIKNGSIDDFSVWRSAFANDALDRLLEKVILPKLEKLMDEELVIDPSNQDLEIFFIILSWKGSFKAMVFGQLFADHFFPKWLETLYQWLTEAPNFDEASEWYTWWKSVFPKDLLSNAYIQQGFSKGLDMMNECLENKSITAPLPFAKDSTKGVNLQFSKEKHEFTAESDDTTSYDEPLVSFRELVEEFCAENSLLFVPLRRSHLSTGSALFRISTQASKARGITVYLRNDIIWKKSPGASEDTPYDPIGFNEILLMFNNN</sequence>
<evidence type="ECO:0000255" key="1">
    <source>
        <dbReference type="PROSITE-ProRule" id="PRU00092"/>
    </source>
</evidence>
<evidence type="ECO:0000256" key="2">
    <source>
        <dbReference type="SAM" id="MobiDB-lite"/>
    </source>
</evidence>
<evidence type="ECO:0000269" key="3">
    <source>
    </source>
</evidence>
<evidence type="ECO:0000305" key="4"/>
<evidence type="ECO:0007829" key="5">
    <source>
        <dbReference type="PDB" id="9ESI"/>
    </source>
</evidence>
<feature type="chain" id="PRO_0000303956" description="G-patch domain-containing protein C1486.03">
    <location>
        <begin position="1"/>
        <end position="797"/>
    </location>
</feature>
<feature type="domain" description="G-patch" evidence="1">
    <location>
        <begin position="115"/>
        <end position="161"/>
    </location>
</feature>
<feature type="region of interest" description="Disordered" evidence="2">
    <location>
        <begin position="1"/>
        <end position="33"/>
    </location>
</feature>
<feature type="region of interest" description="Disordered" evidence="2">
    <location>
        <begin position="159"/>
        <end position="204"/>
    </location>
</feature>
<feature type="compositionally biased region" description="Polar residues" evidence="2">
    <location>
        <begin position="1"/>
        <end position="12"/>
    </location>
</feature>
<feature type="compositionally biased region" description="Basic and acidic residues" evidence="2">
    <location>
        <begin position="159"/>
        <end position="185"/>
    </location>
</feature>
<feature type="compositionally biased region" description="Basic residues" evidence="2">
    <location>
        <begin position="186"/>
        <end position="199"/>
    </location>
</feature>
<feature type="helix" evidence="5">
    <location>
        <begin position="265"/>
        <end position="317"/>
    </location>
</feature>
<feature type="helix" evidence="5">
    <location>
        <begin position="327"/>
        <end position="333"/>
    </location>
</feature>
<feature type="helix" evidence="5">
    <location>
        <begin position="335"/>
        <end position="347"/>
    </location>
</feature>
<feature type="strand" evidence="5">
    <location>
        <begin position="351"/>
        <end position="353"/>
    </location>
</feature>
<feature type="helix" evidence="5">
    <location>
        <begin position="357"/>
        <end position="374"/>
    </location>
</feature>
<feature type="turn" evidence="5">
    <location>
        <begin position="378"/>
        <end position="380"/>
    </location>
</feature>
<feature type="turn" evidence="5">
    <location>
        <begin position="382"/>
        <end position="385"/>
    </location>
</feature>
<feature type="helix" evidence="5">
    <location>
        <begin position="386"/>
        <end position="397"/>
    </location>
</feature>
<feature type="helix" evidence="5">
    <location>
        <begin position="429"/>
        <end position="436"/>
    </location>
</feature>
<feature type="helix" evidence="5">
    <location>
        <begin position="438"/>
        <end position="448"/>
    </location>
</feature>
<feature type="helix" evidence="5">
    <location>
        <begin position="454"/>
        <end position="464"/>
    </location>
</feature>
<feature type="turn" evidence="5">
    <location>
        <begin position="465"/>
        <end position="467"/>
    </location>
</feature>
<feature type="helix" evidence="5">
    <location>
        <begin position="470"/>
        <end position="479"/>
    </location>
</feature>
<feature type="helix" evidence="5">
    <location>
        <begin position="481"/>
        <end position="490"/>
    </location>
</feature>
<feature type="helix" evidence="5">
    <location>
        <begin position="494"/>
        <end position="496"/>
    </location>
</feature>
<feature type="helix" evidence="5">
    <location>
        <begin position="500"/>
        <end position="502"/>
    </location>
</feature>
<feature type="helix" evidence="5">
    <location>
        <begin position="504"/>
        <end position="508"/>
    </location>
</feature>
<feature type="helix" evidence="5">
    <location>
        <begin position="511"/>
        <end position="515"/>
    </location>
</feature>
<feature type="helix" evidence="5">
    <location>
        <begin position="517"/>
        <end position="534"/>
    </location>
</feature>
<feature type="helix" evidence="5">
    <location>
        <begin position="547"/>
        <end position="551"/>
    </location>
</feature>
<feature type="helix" evidence="5">
    <location>
        <begin position="555"/>
        <end position="557"/>
    </location>
</feature>
<feature type="helix" evidence="5">
    <location>
        <begin position="558"/>
        <end position="577"/>
    </location>
</feature>
<feature type="helix" evidence="5">
    <location>
        <begin position="588"/>
        <end position="597"/>
    </location>
</feature>
<feature type="helix" evidence="5">
    <location>
        <begin position="598"/>
        <end position="600"/>
    </location>
</feature>
<feature type="helix" evidence="5">
    <location>
        <begin position="603"/>
        <end position="628"/>
    </location>
</feature>
<feature type="helix" evidence="5">
    <location>
        <begin position="632"/>
        <end position="645"/>
    </location>
</feature>
<feature type="helix" evidence="5">
    <location>
        <begin position="650"/>
        <end position="652"/>
    </location>
</feature>
<feature type="helix" evidence="5">
    <location>
        <begin position="654"/>
        <end position="671"/>
    </location>
</feature>
<feature type="helix" evidence="5">
    <location>
        <begin position="718"/>
        <end position="728"/>
    </location>
</feature>
<feature type="strand" evidence="5">
    <location>
        <begin position="732"/>
        <end position="739"/>
    </location>
</feature>
<feature type="turn" evidence="5">
    <location>
        <begin position="741"/>
        <end position="743"/>
    </location>
</feature>
<feature type="strand" evidence="5">
    <location>
        <begin position="746"/>
        <end position="754"/>
    </location>
</feature>
<feature type="strand" evidence="5">
    <location>
        <begin position="757"/>
        <end position="765"/>
    </location>
</feature>
<feature type="strand" evidence="5">
    <location>
        <begin position="768"/>
        <end position="771"/>
    </location>
</feature>
<feature type="helix" evidence="5">
    <location>
        <begin position="787"/>
        <end position="795"/>
    </location>
</feature>
<accession>Q9UTK6</accession>
<protein>
    <recommendedName>
        <fullName>G-patch domain-containing protein C1486.03</fullName>
    </recommendedName>
</protein>
<proteinExistence type="evidence at protein level"/>
<dbReference type="EMBL" id="CU329670">
    <property type="protein sequence ID" value="CAB62413.1"/>
    <property type="molecule type" value="Genomic_DNA"/>
</dbReference>
<dbReference type="PIR" id="T50072">
    <property type="entry name" value="T50072"/>
</dbReference>
<dbReference type="PDB" id="9ESH">
    <property type="method" value="EM"/>
    <property type="resolution" value="3.20 A"/>
    <property type="chains" value="m=1-797"/>
</dbReference>
<dbReference type="PDB" id="9ESI">
    <property type="method" value="EM"/>
    <property type="resolution" value="3.10 A"/>
    <property type="chains" value="m=1-797"/>
</dbReference>
<dbReference type="PDBsum" id="9ESH"/>
<dbReference type="PDBsum" id="9ESI"/>
<dbReference type="EMDB" id="EMD-19941"/>
<dbReference type="EMDB" id="EMD-19942"/>
<dbReference type="SMR" id="Q9UTK6"/>
<dbReference type="BioGRID" id="279353">
    <property type="interactions" value="122"/>
</dbReference>
<dbReference type="FunCoup" id="Q9UTK6">
    <property type="interactions" value="734"/>
</dbReference>
<dbReference type="IntAct" id="Q9UTK6">
    <property type="interactions" value="1"/>
</dbReference>
<dbReference type="STRING" id="284812.Q9UTK6"/>
<dbReference type="iPTMnet" id="Q9UTK6"/>
<dbReference type="PaxDb" id="4896-SPAC1486.03c.1"/>
<dbReference type="EnsemblFungi" id="SPAC1486.03c.1">
    <property type="protein sequence ID" value="SPAC1486.03c.1:pep"/>
    <property type="gene ID" value="SPAC1486.03c"/>
</dbReference>
<dbReference type="KEGG" id="spo:2542910"/>
<dbReference type="PomBase" id="SPAC1486.03c"/>
<dbReference type="VEuPathDB" id="FungiDB:SPAC1486.03c"/>
<dbReference type="eggNOG" id="KOG2184">
    <property type="taxonomic scope" value="Eukaryota"/>
</dbReference>
<dbReference type="HOGENOM" id="CLU_007977_2_0_1"/>
<dbReference type="InParanoid" id="Q9UTK6"/>
<dbReference type="OMA" id="CEQDIIQ"/>
<dbReference type="PhylomeDB" id="Q9UTK6"/>
<dbReference type="PRO" id="PR:Q9UTK6"/>
<dbReference type="Proteomes" id="UP000002485">
    <property type="component" value="Chromosome I"/>
</dbReference>
<dbReference type="GO" id="GO:0005737">
    <property type="term" value="C:cytoplasm"/>
    <property type="evidence" value="ECO:0007669"/>
    <property type="project" value="UniProtKB-KW"/>
</dbReference>
<dbReference type="GO" id="GO:0005634">
    <property type="term" value="C:nucleus"/>
    <property type="evidence" value="ECO:0007005"/>
    <property type="project" value="PomBase"/>
</dbReference>
<dbReference type="GO" id="GO:0071014">
    <property type="term" value="C:post-mRNA release spliceosomal complex"/>
    <property type="evidence" value="ECO:0000314"/>
    <property type="project" value="PomBase"/>
</dbReference>
<dbReference type="GO" id="GO:0005816">
    <property type="term" value="C:spindle pole body"/>
    <property type="evidence" value="ECO:0007669"/>
    <property type="project" value="UniProtKB-SubCell"/>
</dbReference>
<dbReference type="GO" id="GO:0005681">
    <property type="term" value="C:spliceosomal complex"/>
    <property type="evidence" value="ECO:0000250"/>
    <property type="project" value="UniProtKB"/>
</dbReference>
<dbReference type="GO" id="GO:0071008">
    <property type="term" value="C:U2-type post-mRNA release spliceosomal complex"/>
    <property type="evidence" value="ECO:0000318"/>
    <property type="project" value="GO_Central"/>
</dbReference>
<dbReference type="GO" id="GO:0003723">
    <property type="term" value="F:RNA binding"/>
    <property type="evidence" value="ECO:0000266"/>
    <property type="project" value="PomBase"/>
</dbReference>
<dbReference type="GO" id="GO:0045292">
    <property type="term" value="P:mRNA cis splicing, via spliceosome"/>
    <property type="evidence" value="ECO:0000266"/>
    <property type="project" value="PomBase"/>
</dbReference>
<dbReference type="GO" id="GO:0000390">
    <property type="term" value="P:spliceosomal complex disassembly"/>
    <property type="evidence" value="ECO:0000353"/>
    <property type="project" value="PomBase"/>
</dbReference>
<dbReference type="InterPro" id="IPR000467">
    <property type="entry name" value="G_patch_dom"/>
</dbReference>
<dbReference type="InterPro" id="IPR022783">
    <property type="entry name" value="GCFC_dom"/>
</dbReference>
<dbReference type="InterPro" id="IPR045211">
    <property type="entry name" value="TFP11/STIP/Ntr1"/>
</dbReference>
<dbReference type="PANTHER" id="PTHR23329:SF1">
    <property type="entry name" value="TUFTELIN-INTERACTING PROTEIN 11"/>
    <property type="match status" value="1"/>
</dbReference>
<dbReference type="PANTHER" id="PTHR23329">
    <property type="entry name" value="TUFTELIN-INTERACTING PROTEIN 11-RELATED"/>
    <property type="match status" value="1"/>
</dbReference>
<dbReference type="Pfam" id="PF01585">
    <property type="entry name" value="G-patch"/>
    <property type="match status" value="1"/>
</dbReference>
<dbReference type="Pfam" id="PF07842">
    <property type="entry name" value="GCFC"/>
    <property type="match status" value="1"/>
</dbReference>
<dbReference type="SMART" id="SM00443">
    <property type="entry name" value="G_patch"/>
    <property type="match status" value="1"/>
</dbReference>
<dbReference type="PROSITE" id="PS50174">
    <property type="entry name" value="G_PATCH"/>
    <property type="match status" value="1"/>
</dbReference>
<name>YKR3_SCHPO</name>